<comment type="function">
    <text evidence="1">Immunity component of an LXG toxin-immunity module. These modules promote kin selection, mediate competition in biofilms, and drive spatial segregation of different strains, indicating that LXG toxins may help avoid warfare between strains in biofilms. Neutralizes the toxic abilities of cognate toxin YeeF upon expression in E.coli and in vitro.</text>
</comment>
<comment type="subunit">
    <text evidence="1 3">Monomer (PubMed:32117125). Interacts with the C-terminus of cognate toxin YeeF, probably with 2:2 stoichiometry. The second YezG molecules binds with lower affinity (Probable).</text>
</comment>
<comment type="subcellular location">
    <subcellularLocation>
        <location evidence="3">Cytoplasm</location>
    </subcellularLocation>
</comment>
<gene>
    <name evidence="2" type="primary">yezG</name>
    <name evidence="4" type="ordered locus">BSUW23_03450</name>
</gene>
<keyword id="KW-0963">Cytoplasm</keyword>
<name>YEZG_BACSH</name>
<feature type="chain" id="PRO_0000456173" description="Immunity protein YezG">
    <location>
        <begin position="1"/>
        <end position="161"/>
    </location>
</feature>
<dbReference type="EMBL" id="CP002183">
    <property type="protein sequence ID" value="ADM36746.1"/>
    <property type="molecule type" value="Genomic_DNA"/>
</dbReference>
<dbReference type="SASBDB" id="E0TU95"/>
<dbReference type="SMR" id="E0TU95"/>
<dbReference type="KEGG" id="bss:BSUW23_03450"/>
<dbReference type="HOGENOM" id="CLU_107164_0_0_9"/>
<dbReference type="Proteomes" id="UP000002233">
    <property type="component" value="Chromosome"/>
</dbReference>
<dbReference type="GO" id="GO:0005737">
    <property type="term" value="C:cytoplasm"/>
    <property type="evidence" value="ECO:0007669"/>
    <property type="project" value="UniProtKB-SubCell"/>
</dbReference>
<dbReference type="Gene3D" id="3.30.500.20">
    <property type="entry name" value="BH3703-like domains"/>
    <property type="match status" value="1"/>
</dbReference>
<dbReference type="InterPro" id="IPR006728">
    <property type="entry name" value="YezG-like"/>
</dbReference>
<dbReference type="InterPro" id="IPR036170">
    <property type="entry name" value="YezG-like_sf"/>
</dbReference>
<dbReference type="NCBIfam" id="TIGR01741">
    <property type="entry name" value="staph_tand_hypo"/>
    <property type="match status" value="1"/>
</dbReference>
<dbReference type="Pfam" id="PF04634">
    <property type="entry name" value="YezG-like"/>
    <property type="match status" value="1"/>
</dbReference>
<dbReference type="SUPFAM" id="SSF160424">
    <property type="entry name" value="BH3703-like"/>
    <property type="match status" value="1"/>
</dbReference>
<organism>
    <name type="scientific">Bacillus spizizenii (strain ATCC 23059 / NRRL B-14472 / W23)</name>
    <name type="common">Bacillus subtilis subsp. spizizenii</name>
    <dbReference type="NCBI Taxonomy" id="655816"/>
    <lineage>
        <taxon>Bacteria</taxon>
        <taxon>Bacillati</taxon>
        <taxon>Bacillota</taxon>
        <taxon>Bacilli</taxon>
        <taxon>Bacillales</taxon>
        <taxon>Bacillaceae</taxon>
        <taxon>Bacillus</taxon>
    </lineage>
</organism>
<evidence type="ECO:0000269" key="1">
    <source>
    </source>
</evidence>
<evidence type="ECO:0000303" key="2">
    <source>
    </source>
</evidence>
<evidence type="ECO:0000305" key="3">
    <source>
    </source>
</evidence>
<evidence type="ECO:0000312" key="4">
    <source>
        <dbReference type="EMBL" id="ADM36746.1"/>
    </source>
</evidence>
<sequence length="161" mass="19234">MDTPKMGDLYQRIANQINEMIPSEWENVYLYAEILDDSSEVYFYFNIPGKNEFLYSHNIPEHFNVSEDIYDDLLIELQESFEELREEYEKNNPETWTNLTLKLDRTGQFSIDYNYEDVIASELNGSQRKAVWVYKNLGLMPKRKTVRDFLEDYIKTNEGKI</sequence>
<protein>
    <recommendedName>
        <fullName evidence="2">Immunity protein YezG</fullName>
    </recommendedName>
</protein>
<proteinExistence type="evidence at protein level"/>
<accession>E0TU95</accession>
<reference evidence="4" key="1">
    <citation type="journal article" date="2011" name="Microbiology">
        <title>The genome sequence of Bacillus subtilis subsp. spizizenii W23: insights into speciation within the B. subtilis complex and into the history of B. subtilis genetics.</title>
        <authorList>
            <person name="Zeigler D.R."/>
        </authorList>
    </citation>
    <scope>NUCLEOTIDE SEQUENCE [LARGE SCALE GENOMIC DNA]</scope>
    <source>
        <strain>ATCC 23059 / NRRL B-14472 / W23</strain>
    </source>
</reference>
<reference key="2">
    <citation type="journal article" date="2020" name="Front. Microbiol.">
        <title>Molecular and Biochemical Characterization of YeeF/YezG, a Polymorphic Toxin-Immunity Protein Pair From Bacillus subtilis.</title>
        <authorList>
            <person name="Kaundal S."/>
            <person name="Deep A."/>
            <person name="Kaur G."/>
            <person name="Thakur K.G."/>
        </authorList>
    </citation>
    <scope>FUNCTION AS AN IMMUNITY PROTEIN</scope>
    <scope>SUBUNIT</scope>
    <scope>SUBCELLULAR LOCATION</scope>
    <scope>EXPRESSION IN E.COLI</scope>
</reference>